<comment type="catalytic activity">
    <reaction>
        <text>D-tagatofuranose 1,6-bisphosphate = D-glyceraldehyde 3-phosphate + dihydroxyacetone phosphate</text>
        <dbReference type="Rhea" id="RHEA:22948"/>
        <dbReference type="ChEBI" id="CHEBI:57642"/>
        <dbReference type="ChEBI" id="CHEBI:58694"/>
        <dbReference type="ChEBI" id="CHEBI:59776"/>
        <dbReference type="EC" id="4.1.2.40"/>
    </reaction>
</comment>
<comment type="pathway">
    <text>Carbohydrate metabolism; D-tagatose 6-phosphate degradation; D-glyceraldehyde 3-phosphate and glycerone phosphate from D-tagatose 6-phosphate: step 2/2.</text>
</comment>
<comment type="similarity">
    <text evidence="1">Belongs to the aldolase LacD family.</text>
</comment>
<sequence length="326" mass="36595">MSKSNQKIASIEQLSNNEGIISALAFDQRGALKRMMAKHQTEEPTVAQIEQLKVLVAEELTQYASSILLDPEYGLPASDARNKDCGLLLAYEKTGYDVNAKGRLPDCLVEWSAKRLKEQGANAVKFLLYYDVDDAEEINIQKKAYIERIGSECVAEDIPFFLEVLTYDDNIPDNGSVEFAKVKPRKVNEAMKLFSEPRFNVDVLKVEVPVNMKYVEGFAEGEVVYTKEEAAQHFKDQDAATHLPYIYLSAGVSAELFQETLKFAHEAGAKFNGVLCGRATWSGAVQVYIEQGEDAAREWLRTTGFKNIDDLNKVLKDTATSWKQRK</sequence>
<evidence type="ECO:0000305" key="1"/>
<organism>
    <name type="scientific">Staphylococcus aureus (strain NCTC 8325 / PS 47)</name>
    <dbReference type="NCBI Taxonomy" id="93061"/>
    <lineage>
        <taxon>Bacteria</taxon>
        <taxon>Bacillati</taxon>
        <taxon>Bacillota</taxon>
        <taxon>Bacilli</taxon>
        <taxon>Bacillales</taxon>
        <taxon>Staphylococcaceae</taxon>
        <taxon>Staphylococcus</taxon>
    </lineage>
</organism>
<name>LACD_STAA8</name>
<accession>P0A011</accession>
<accession>P11100</accession>
<accession>Q2G2R3</accession>
<proteinExistence type="evidence at protein level"/>
<protein>
    <recommendedName>
        <fullName>Tagatose 1,6-diphosphate aldolase</fullName>
        <ecNumber>4.1.2.40</ecNumber>
    </recommendedName>
    <alternativeName>
        <fullName>D-tagatose-1,6-bisphosphate aldolase</fullName>
    </alternativeName>
    <alternativeName>
        <fullName>Tagatose-bisphosphate aldolase</fullName>
    </alternativeName>
</protein>
<keyword id="KW-0423">Lactose metabolism</keyword>
<keyword id="KW-0456">Lyase</keyword>
<keyword id="KW-1185">Reference proteome</keyword>
<gene>
    <name type="primary">lacD</name>
    <name type="ordered locus">SAOUHSC_02452</name>
</gene>
<feature type="chain" id="PRO_0000203949" description="Tagatose 1,6-diphosphate aldolase">
    <location>
        <begin position="1"/>
        <end position="326"/>
    </location>
</feature>
<reference key="1">
    <citation type="journal article" date="1989" name="Nucleic Acids Res.">
        <title>The nucleotide sequence of the lacC and lacD genes of Staphylococcus aureus.</title>
        <authorList>
            <person name="Rosey E.L."/>
            <person name="Stewart G.C."/>
        </authorList>
    </citation>
    <scope>NUCLEOTIDE SEQUENCE [GENOMIC DNA]</scope>
</reference>
<reference key="2">
    <citation type="book" date="2006" name="Gram positive pathogens, 2nd edition">
        <title>The Staphylococcus aureus NCTC 8325 genome.</title>
        <editorList>
            <person name="Fischetti V."/>
            <person name="Novick R."/>
            <person name="Ferretti J."/>
            <person name="Portnoy D."/>
            <person name="Rood J."/>
        </editorList>
        <authorList>
            <person name="Gillaspy A.F."/>
            <person name="Worrell V."/>
            <person name="Orvis J."/>
            <person name="Roe B.A."/>
            <person name="Dyer D.W."/>
            <person name="Iandolo J.J."/>
        </authorList>
    </citation>
    <scope>NUCLEOTIDE SEQUENCE [LARGE SCALE GENOMIC DNA]</scope>
    <source>
        <strain>NCTC 8325 / PS 47</strain>
    </source>
</reference>
<reference key="3">
    <citation type="journal article" date="1991" name="J. Bacteriol.">
        <title>Lactose metabolism by Staphylococcus aureus: characterization of lacABCD, the structural genes of the tagatose 6-phosphate pathway.</title>
        <authorList>
            <person name="Rosey E.L."/>
            <person name="Oskouian B."/>
            <person name="Stewart G.C."/>
        </authorList>
    </citation>
    <scope>CHARACTERIZATION</scope>
</reference>
<dbReference type="EC" id="4.1.2.40"/>
<dbReference type="EMBL" id="X14827">
    <property type="protein sequence ID" value="CAA32936.1"/>
    <property type="molecule type" value="Genomic_DNA"/>
</dbReference>
<dbReference type="EMBL" id="CP000253">
    <property type="protein sequence ID" value="ABD31472.1"/>
    <property type="molecule type" value="Genomic_DNA"/>
</dbReference>
<dbReference type="PIR" id="S04359">
    <property type="entry name" value="S04359"/>
</dbReference>
<dbReference type="RefSeq" id="WP_000047009.1">
    <property type="nucleotide sequence ID" value="NZ_LS483365.1"/>
</dbReference>
<dbReference type="RefSeq" id="YP_500919.1">
    <property type="nucleotide sequence ID" value="NC_007795.1"/>
</dbReference>
<dbReference type="SMR" id="P0A011"/>
<dbReference type="STRING" id="93061.SAOUHSC_02452"/>
<dbReference type="PaxDb" id="1280-SAXN108_2445"/>
<dbReference type="GeneID" id="3919015"/>
<dbReference type="KEGG" id="sao:SAOUHSC_02452"/>
<dbReference type="PATRIC" id="fig|93061.5.peg.2211"/>
<dbReference type="eggNOG" id="COG3684">
    <property type="taxonomic scope" value="Bacteria"/>
</dbReference>
<dbReference type="HOGENOM" id="CLU_058971_0_1_9"/>
<dbReference type="OrthoDB" id="106309at2"/>
<dbReference type="UniPathway" id="UPA00704">
    <property type="reaction ID" value="UER00716"/>
</dbReference>
<dbReference type="PRO" id="PR:P0A011"/>
<dbReference type="Proteomes" id="UP000008816">
    <property type="component" value="Chromosome"/>
</dbReference>
<dbReference type="GO" id="GO:0061595">
    <property type="term" value="F:6-deoxy-6-sulfofructose-1-phosphate aldolase activity"/>
    <property type="evidence" value="ECO:0000318"/>
    <property type="project" value="GO_Central"/>
</dbReference>
<dbReference type="GO" id="GO:0009024">
    <property type="term" value="F:tagatose-6-phosphate kinase activity"/>
    <property type="evidence" value="ECO:0007669"/>
    <property type="project" value="InterPro"/>
</dbReference>
<dbReference type="GO" id="GO:0009025">
    <property type="term" value="F:tagatose-bisphosphate aldolase activity"/>
    <property type="evidence" value="ECO:0007669"/>
    <property type="project" value="UniProtKB-UniRule"/>
</dbReference>
<dbReference type="GO" id="GO:1902777">
    <property type="term" value="P:6-sulfoquinovose(1-) catabolic process"/>
    <property type="evidence" value="ECO:0000318"/>
    <property type="project" value="GO_Central"/>
</dbReference>
<dbReference type="GO" id="GO:2001059">
    <property type="term" value="P:D-tagatose 6-phosphate catabolic process"/>
    <property type="evidence" value="ECO:0007669"/>
    <property type="project" value="UniProtKB-UniRule"/>
</dbReference>
<dbReference type="GO" id="GO:0019512">
    <property type="term" value="P:lactose catabolic process via tagatose-6-phosphate"/>
    <property type="evidence" value="ECO:0007669"/>
    <property type="project" value="InterPro"/>
</dbReference>
<dbReference type="FunFam" id="3.20.20.70:FF:000137">
    <property type="entry name" value="Tagatose 1,6-diphosphate aldolase 2"/>
    <property type="match status" value="1"/>
</dbReference>
<dbReference type="Gene3D" id="3.20.20.70">
    <property type="entry name" value="Aldolase class I"/>
    <property type="match status" value="1"/>
</dbReference>
<dbReference type="HAMAP" id="MF_00734">
    <property type="entry name" value="LacD"/>
    <property type="match status" value="1"/>
</dbReference>
<dbReference type="InterPro" id="IPR013785">
    <property type="entry name" value="Aldolase_TIM"/>
</dbReference>
<dbReference type="InterPro" id="IPR002915">
    <property type="entry name" value="DeoC/FbaB/LacD_aldolase"/>
</dbReference>
<dbReference type="InterPro" id="IPR050552">
    <property type="entry name" value="LacD_aldolase"/>
</dbReference>
<dbReference type="InterPro" id="IPR005927">
    <property type="entry name" value="Tag_1.6-dipho_adolase"/>
</dbReference>
<dbReference type="NCBIfam" id="TIGR01232">
    <property type="entry name" value="lacD"/>
    <property type="match status" value="1"/>
</dbReference>
<dbReference type="NCBIfam" id="NF003180">
    <property type="entry name" value="PRK04161.1"/>
    <property type="match status" value="1"/>
</dbReference>
<dbReference type="NCBIfam" id="NF009065">
    <property type="entry name" value="PRK12399.1"/>
    <property type="match status" value="1"/>
</dbReference>
<dbReference type="NCBIfam" id="NF009498">
    <property type="entry name" value="PRK12858.1"/>
    <property type="match status" value="1"/>
</dbReference>
<dbReference type="PANTHER" id="PTHR39340">
    <property type="entry name" value="SULFOFRUCTOSEPHOSPHATE ALDOLASE"/>
    <property type="match status" value="1"/>
</dbReference>
<dbReference type="PANTHER" id="PTHR39340:SF1">
    <property type="entry name" value="SULFOFRUCTOSEPHOSPHATE ALDOLASE"/>
    <property type="match status" value="1"/>
</dbReference>
<dbReference type="Pfam" id="PF01791">
    <property type="entry name" value="DeoC"/>
    <property type="match status" value="1"/>
</dbReference>
<dbReference type="SMART" id="SM01133">
    <property type="entry name" value="DeoC"/>
    <property type="match status" value="1"/>
</dbReference>
<dbReference type="SUPFAM" id="SSF51569">
    <property type="entry name" value="Aldolase"/>
    <property type="match status" value="1"/>
</dbReference>